<feature type="chain" id="PRO_0000175581" description="Flavin-dependent thymidylate synthase">
    <location>
        <begin position="1"/>
        <end position="270"/>
    </location>
</feature>
<feature type="domain" description="ThyX" evidence="2">
    <location>
        <begin position="13"/>
        <end position="218"/>
    </location>
</feature>
<feature type="short sequence motif" description="ThyX motif" evidence="1">
    <location>
        <begin position="82"/>
        <end position="92"/>
    </location>
</feature>
<feature type="active site" description="Involved in ionization of N3 of dUMP, leading to its activation" evidence="1">
    <location>
        <position position="184"/>
    </location>
</feature>
<feature type="binding site" evidence="1">
    <location>
        <position position="59"/>
    </location>
    <ligand>
        <name>FAD</name>
        <dbReference type="ChEBI" id="CHEBI:57692"/>
        <note>ligand shared between neighboring subunits</note>
    </ligand>
</feature>
<feature type="binding site" evidence="1">
    <location>
        <begin position="79"/>
        <end position="82"/>
    </location>
    <ligand>
        <name>dUMP</name>
        <dbReference type="ChEBI" id="CHEBI:246422"/>
        <note>ligand shared between dimeric partners</note>
    </ligand>
</feature>
<feature type="binding site" evidence="1">
    <location>
        <begin position="82"/>
        <end position="84"/>
    </location>
    <ligand>
        <name>FAD</name>
        <dbReference type="ChEBI" id="CHEBI:57692"/>
        <note>ligand shared between neighboring subunits</note>
    </ligand>
</feature>
<feature type="binding site" description="in other chain" evidence="1">
    <location>
        <begin position="90"/>
        <end position="94"/>
    </location>
    <ligand>
        <name>dUMP</name>
        <dbReference type="ChEBI" id="CHEBI:246422"/>
        <note>ligand shared between dimeric partners</note>
    </ligand>
</feature>
<feature type="binding site" evidence="1">
    <location>
        <position position="90"/>
    </location>
    <ligand>
        <name>FAD</name>
        <dbReference type="ChEBI" id="CHEBI:57692"/>
        <note>ligand shared between neighboring subunits</note>
    </ligand>
</feature>
<feature type="binding site" description="in other chain" evidence="1">
    <location>
        <position position="157"/>
    </location>
    <ligand>
        <name>dUMP</name>
        <dbReference type="ChEBI" id="CHEBI:246422"/>
        <note>ligand shared between dimeric partners</note>
    </ligand>
</feature>
<feature type="binding site" evidence="1">
    <location>
        <begin position="173"/>
        <end position="175"/>
    </location>
    <ligand>
        <name>FAD</name>
        <dbReference type="ChEBI" id="CHEBI:57692"/>
        <note>ligand shared between neighboring subunits</note>
    </ligand>
</feature>
<feature type="binding site" evidence="1">
    <location>
        <position position="179"/>
    </location>
    <ligand>
        <name>FAD</name>
        <dbReference type="ChEBI" id="CHEBI:57692"/>
        <note>ligand shared between neighboring subunits</note>
    </ligand>
</feature>
<feature type="binding site" evidence="1">
    <location>
        <position position="184"/>
    </location>
    <ligand>
        <name>dUMP</name>
        <dbReference type="ChEBI" id="CHEBI:246422"/>
        <note>ligand shared between dimeric partners</note>
    </ligand>
</feature>
<feature type="strand" evidence="3">
    <location>
        <begin position="6"/>
        <end position="9"/>
    </location>
</feature>
<feature type="turn" evidence="3">
    <location>
        <begin position="10"/>
        <end position="12"/>
    </location>
</feature>
<feature type="strand" evidence="3">
    <location>
        <begin position="13"/>
        <end position="21"/>
    </location>
</feature>
<feature type="helix" evidence="3">
    <location>
        <begin position="24"/>
        <end position="32"/>
    </location>
</feature>
<feature type="helix" evidence="3">
    <location>
        <begin position="42"/>
        <end position="54"/>
    </location>
</feature>
<feature type="helix" evidence="3">
    <location>
        <begin position="59"/>
        <end position="63"/>
    </location>
</feature>
<feature type="strand" evidence="3">
    <location>
        <begin position="65"/>
        <end position="73"/>
    </location>
</feature>
<feature type="helix" evidence="3">
    <location>
        <begin position="74"/>
        <end position="80"/>
    </location>
</feature>
<feature type="strand" evidence="3">
    <location>
        <begin position="86"/>
        <end position="90"/>
    </location>
</feature>
<feature type="turn" evidence="3">
    <location>
        <begin position="93"/>
        <end position="95"/>
    </location>
</feature>
<feature type="helix" evidence="3">
    <location>
        <begin position="132"/>
        <end position="148"/>
    </location>
</feature>
<feature type="helix" evidence="3">
    <location>
        <begin position="153"/>
        <end position="156"/>
    </location>
</feature>
<feature type="helix" evidence="3">
    <location>
        <begin position="157"/>
        <end position="159"/>
    </location>
</feature>
<feature type="strand" evidence="3">
    <location>
        <begin position="164"/>
        <end position="173"/>
    </location>
</feature>
<feature type="helix" evidence="3">
    <location>
        <begin position="174"/>
        <end position="184"/>
    </location>
</feature>
<feature type="helix" evidence="3">
    <location>
        <begin position="191"/>
        <end position="207"/>
    </location>
</feature>
<feature type="helix" evidence="3">
    <location>
        <begin position="209"/>
        <end position="218"/>
    </location>
</feature>
<feature type="turn" evidence="3">
    <location>
        <begin position="219"/>
        <end position="221"/>
    </location>
</feature>
<feature type="strand" evidence="3">
    <location>
        <begin position="223"/>
        <end position="225"/>
    </location>
</feature>
<feature type="helix" evidence="3">
    <location>
        <begin position="227"/>
        <end position="236"/>
    </location>
</feature>
<feature type="helix" evidence="3">
    <location>
        <begin position="239"/>
        <end position="248"/>
    </location>
</feature>
<feature type="helix" evidence="3">
    <location>
        <begin position="253"/>
        <end position="263"/>
    </location>
</feature>
<comment type="function">
    <text evidence="1">Catalyzes the reductive methylation of 2'-deoxyuridine-5'-monophosphate (dUMP) to 2'-deoxythymidine-5'-monophosphate (dTMP) while utilizing 5,10-methylenetetrahydrofolate (mTHF) as the methyl donor, and NADPH and FADH(2) as the reductant.</text>
</comment>
<comment type="catalytic activity">
    <reaction evidence="1">
        <text>dUMP + (6R)-5,10-methylene-5,6,7,8-tetrahydrofolate + NADPH + H(+) = dTMP + (6S)-5,6,7,8-tetrahydrofolate + NADP(+)</text>
        <dbReference type="Rhea" id="RHEA:29043"/>
        <dbReference type="ChEBI" id="CHEBI:15378"/>
        <dbReference type="ChEBI" id="CHEBI:15636"/>
        <dbReference type="ChEBI" id="CHEBI:57453"/>
        <dbReference type="ChEBI" id="CHEBI:57783"/>
        <dbReference type="ChEBI" id="CHEBI:58349"/>
        <dbReference type="ChEBI" id="CHEBI:63528"/>
        <dbReference type="ChEBI" id="CHEBI:246422"/>
        <dbReference type="EC" id="2.1.1.148"/>
    </reaction>
</comment>
<comment type="cofactor">
    <cofactor evidence="1">
        <name>FAD</name>
        <dbReference type="ChEBI" id="CHEBI:57692"/>
    </cofactor>
    <text evidence="1">Binds 4 FAD per tetramer. Each FAD binding site is formed by three monomers.</text>
</comment>
<comment type="pathway">
    <text evidence="1">Pyrimidine metabolism; dTTP biosynthesis.</text>
</comment>
<comment type="subunit">
    <text evidence="1">Homotetramer.</text>
</comment>
<comment type="similarity">
    <text evidence="1">Belongs to the thymidylate synthase ThyX family.</text>
</comment>
<accession>Q5SJB8</accession>
<name>THYX_THET8</name>
<proteinExistence type="evidence at protein level"/>
<sequence length="270" mass="31006">MEGPLTIPVLDKGFVRLVDQMGDDRAIVQAARVSYGEGTKTVREDAALIDYLMRHRHTSPFEMVVFKFHVKAPIFVARQWFRHRTASVNEISGRYSILKEEFYEPEAFRKQAKRNKQASEGALLDEEALALLRKVQQEAYGAYRALLEKGVAREMARMVLPLNLYTEFYWKQDLHNLFHFLKLRLAPEAQWEIRQYARAIAEIVKERVPLAWAAFEEHLLEGAFLSRTELRALRGLLTPEVYEKALSSLGLGGSRLKEALEKVFGPGEAL</sequence>
<evidence type="ECO:0000255" key="1">
    <source>
        <dbReference type="HAMAP-Rule" id="MF_01408"/>
    </source>
</evidence>
<evidence type="ECO:0000255" key="2">
    <source>
        <dbReference type="PROSITE-ProRule" id="PRU00661"/>
    </source>
</evidence>
<evidence type="ECO:0007829" key="3">
    <source>
        <dbReference type="PDB" id="6J61"/>
    </source>
</evidence>
<dbReference type="EC" id="2.1.1.148" evidence="1"/>
<dbReference type="EMBL" id="AP008226">
    <property type="protein sequence ID" value="BAD70919.1"/>
    <property type="molecule type" value="Genomic_DNA"/>
</dbReference>
<dbReference type="RefSeq" id="WP_011228435.1">
    <property type="nucleotide sequence ID" value="NC_006461.1"/>
</dbReference>
<dbReference type="RefSeq" id="YP_144362.1">
    <property type="nucleotide sequence ID" value="NC_006461.1"/>
</dbReference>
<dbReference type="PDB" id="6J61">
    <property type="method" value="X-ray"/>
    <property type="resolution" value="2.50 A"/>
    <property type="chains" value="A/B/C/D=1-270"/>
</dbReference>
<dbReference type="PDBsum" id="6J61"/>
<dbReference type="SMR" id="Q5SJB8"/>
<dbReference type="EnsemblBacteria" id="BAD70919">
    <property type="protein sequence ID" value="BAD70919"/>
    <property type="gene ID" value="BAD70919"/>
</dbReference>
<dbReference type="GeneID" id="3168967"/>
<dbReference type="KEGG" id="ttj:TTHA1096"/>
<dbReference type="PATRIC" id="fig|300852.9.peg.1076"/>
<dbReference type="eggNOG" id="COG1351">
    <property type="taxonomic scope" value="Bacteria"/>
</dbReference>
<dbReference type="HOGENOM" id="CLU_067790_0_0_0"/>
<dbReference type="PhylomeDB" id="Q5SJB8"/>
<dbReference type="BRENDA" id="2.1.1.148">
    <property type="organism ID" value="2305"/>
</dbReference>
<dbReference type="UniPathway" id="UPA00575"/>
<dbReference type="Proteomes" id="UP000000532">
    <property type="component" value="Chromosome"/>
</dbReference>
<dbReference type="GO" id="GO:0050660">
    <property type="term" value="F:flavin adenine dinucleotide binding"/>
    <property type="evidence" value="ECO:0007669"/>
    <property type="project" value="InterPro"/>
</dbReference>
<dbReference type="GO" id="GO:0070402">
    <property type="term" value="F:NADPH binding"/>
    <property type="evidence" value="ECO:0007669"/>
    <property type="project" value="TreeGrafter"/>
</dbReference>
<dbReference type="GO" id="GO:0050797">
    <property type="term" value="F:thymidylate synthase (FAD) activity"/>
    <property type="evidence" value="ECO:0007669"/>
    <property type="project" value="UniProtKB-UniRule"/>
</dbReference>
<dbReference type="GO" id="GO:0004799">
    <property type="term" value="F:thymidylate synthase activity"/>
    <property type="evidence" value="ECO:0007669"/>
    <property type="project" value="TreeGrafter"/>
</dbReference>
<dbReference type="GO" id="GO:0006231">
    <property type="term" value="P:dTMP biosynthetic process"/>
    <property type="evidence" value="ECO:0007669"/>
    <property type="project" value="UniProtKB-UniRule"/>
</dbReference>
<dbReference type="GO" id="GO:0006235">
    <property type="term" value="P:dTTP biosynthetic process"/>
    <property type="evidence" value="ECO:0007669"/>
    <property type="project" value="UniProtKB-UniRule"/>
</dbReference>
<dbReference type="GO" id="GO:0032259">
    <property type="term" value="P:methylation"/>
    <property type="evidence" value="ECO:0007669"/>
    <property type="project" value="UniProtKB-KW"/>
</dbReference>
<dbReference type="CDD" id="cd20175">
    <property type="entry name" value="ThyX"/>
    <property type="match status" value="1"/>
</dbReference>
<dbReference type="Gene3D" id="3.30.1360.170">
    <property type="match status" value="1"/>
</dbReference>
<dbReference type="HAMAP" id="MF_01408">
    <property type="entry name" value="ThyX"/>
    <property type="match status" value="1"/>
</dbReference>
<dbReference type="InterPro" id="IPR003669">
    <property type="entry name" value="Thymidylate_synthase_ThyX"/>
</dbReference>
<dbReference type="InterPro" id="IPR036098">
    <property type="entry name" value="Thymidylate_synthase_ThyX_sf"/>
</dbReference>
<dbReference type="NCBIfam" id="TIGR02170">
    <property type="entry name" value="thyX"/>
    <property type="match status" value="1"/>
</dbReference>
<dbReference type="PANTHER" id="PTHR34934">
    <property type="entry name" value="FLAVIN-DEPENDENT THYMIDYLATE SYNTHASE"/>
    <property type="match status" value="1"/>
</dbReference>
<dbReference type="PANTHER" id="PTHR34934:SF1">
    <property type="entry name" value="FLAVIN-DEPENDENT THYMIDYLATE SYNTHASE"/>
    <property type="match status" value="1"/>
</dbReference>
<dbReference type="Pfam" id="PF02511">
    <property type="entry name" value="Thy1"/>
    <property type="match status" value="1"/>
</dbReference>
<dbReference type="SUPFAM" id="SSF69796">
    <property type="entry name" value="Thymidylate synthase-complementing protein Thy1"/>
    <property type="match status" value="1"/>
</dbReference>
<dbReference type="PROSITE" id="PS51331">
    <property type="entry name" value="THYX"/>
    <property type="match status" value="1"/>
</dbReference>
<keyword id="KW-0002">3D-structure</keyword>
<keyword id="KW-0274">FAD</keyword>
<keyword id="KW-0285">Flavoprotein</keyword>
<keyword id="KW-0489">Methyltransferase</keyword>
<keyword id="KW-0521">NADP</keyword>
<keyword id="KW-0545">Nucleotide biosynthesis</keyword>
<keyword id="KW-1185">Reference proteome</keyword>
<keyword id="KW-0808">Transferase</keyword>
<gene>
    <name evidence="1" type="primary">thyX</name>
    <name type="ordered locus">TTHA1096</name>
</gene>
<protein>
    <recommendedName>
        <fullName evidence="1">Flavin-dependent thymidylate synthase</fullName>
        <shortName evidence="1">FDTS</shortName>
        <ecNumber evidence="1">2.1.1.148</ecNumber>
    </recommendedName>
    <alternativeName>
        <fullName evidence="1">FAD-dependent thymidylate synthase</fullName>
    </alternativeName>
    <alternativeName>
        <fullName evidence="1">Thymidylate synthase ThyX</fullName>
        <shortName evidence="1">TS</shortName>
        <shortName evidence="1">TSase</shortName>
    </alternativeName>
</protein>
<organism>
    <name type="scientific">Thermus thermophilus (strain ATCC 27634 / DSM 579 / HB8)</name>
    <dbReference type="NCBI Taxonomy" id="300852"/>
    <lineage>
        <taxon>Bacteria</taxon>
        <taxon>Thermotogati</taxon>
        <taxon>Deinococcota</taxon>
        <taxon>Deinococci</taxon>
        <taxon>Thermales</taxon>
        <taxon>Thermaceae</taxon>
        <taxon>Thermus</taxon>
    </lineage>
</organism>
<reference key="1">
    <citation type="submission" date="2004-11" db="EMBL/GenBank/DDBJ databases">
        <title>Complete genome sequence of Thermus thermophilus HB8.</title>
        <authorList>
            <person name="Masui R."/>
            <person name="Kurokawa K."/>
            <person name="Nakagawa N."/>
            <person name="Tokunaga F."/>
            <person name="Koyama Y."/>
            <person name="Shibata T."/>
            <person name="Oshima T."/>
            <person name="Yokoyama S."/>
            <person name="Yasunaga T."/>
            <person name="Kuramitsu S."/>
        </authorList>
    </citation>
    <scope>NUCLEOTIDE SEQUENCE [LARGE SCALE GENOMIC DNA]</scope>
    <source>
        <strain>ATCC 27634 / DSM 579 / HB8</strain>
    </source>
</reference>